<protein>
    <recommendedName>
        <fullName evidence="1">NADH-quinone oxidoreductase subunit D</fullName>
        <ecNumber evidence="1">7.1.1.-</ecNumber>
    </recommendedName>
    <alternativeName>
        <fullName evidence="1">NADH dehydrogenase I subunit D</fullName>
    </alternativeName>
    <alternativeName>
        <fullName evidence="1">NDH-1 subunit D</fullName>
    </alternativeName>
</protein>
<evidence type="ECO:0000255" key="1">
    <source>
        <dbReference type="HAMAP-Rule" id="MF_01358"/>
    </source>
</evidence>
<sequence length="417" mass="47500">MAEIKNYTLNFGPQHPAAHGVLRLVLELDGEVIQRADPHIGLLHRATEKLAENKTFIQSVPYMDRLDYVSMMVNEHGYVLAIERLLGIDVPERAQYIRVLFDEITRVLNHLMWIGAHALDVGAMAVFLYAFREREDLMDVYEAVSGARMHAAYYRPGGVYRDLPDAMPQFKASKIRNEKALAKMNEARSGSVLDFIDDFFTRFPKCIDEYETLLTDNRIWKQRLVGIGVVSPERALQMGLTGPMLRGSGIAWDLRKKQPYEVYDRMDFDVPVGVNGDCYDRYLVRVEEMRQSVRIAKQCIEWLRKNQGPVMTDNHKVAPPSRVGMKTNMEDLIHHFKLFTEGFHVPEGEAYAAVEHPKGEFGIYLVSDGANKPYRLKIRAPGFAHLASLDEMARGHMIADAVTIIGTQDIVFGEIDR</sequence>
<name>NUOD_BURVG</name>
<proteinExistence type="inferred from homology"/>
<comment type="function">
    <text evidence="1">NDH-1 shuttles electrons from NADH, via FMN and iron-sulfur (Fe-S) centers, to quinones in the respiratory chain. The immediate electron acceptor for the enzyme in this species is believed to be ubiquinone. Couples the redox reaction to proton translocation (for every two electrons transferred, four hydrogen ions are translocated across the cytoplasmic membrane), and thus conserves the redox energy in a proton gradient.</text>
</comment>
<comment type="catalytic activity">
    <reaction evidence="1">
        <text>a quinone + NADH + 5 H(+)(in) = a quinol + NAD(+) + 4 H(+)(out)</text>
        <dbReference type="Rhea" id="RHEA:57888"/>
        <dbReference type="ChEBI" id="CHEBI:15378"/>
        <dbReference type="ChEBI" id="CHEBI:24646"/>
        <dbReference type="ChEBI" id="CHEBI:57540"/>
        <dbReference type="ChEBI" id="CHEBI:57945"/>
        <dbReference type="ChEBI" id="CHEBI:132124"/>
    </reaction>
</comment>
<comment type="subunit">
    <text evidence="1">NDH-1 is composed of 14 different subunits. Subunits NuoB, C, D, E, F, and G constitute the peripheral sector of the complex.</text>
</comment>
<comment type="subcellular location">
    <subcellularLocation>
        <location evidence="1">Cell inner membrane</location>
        <topology evidence="1">Peripheral membrane protein</topology>
        <orientation evidence="1">Cytoplasmic side</orientation>
    </subcellularLocation>
</comment>
<comment type="similarity">
    <text evidence="1">Belongs to the complex I 49 kDa subunit family.</text>
</comment>
<gene>
    <name evidence="1" type="primary">nuoD</name>
    <name type="ordered locus">Bcep1808_2331</name>
</gene>
<organism>
    <name type="scientific">Burkholderia vietnamiensis (strain G4 / LMG 22486)</name>
    <name type="common">Burkholderia cepacia (strain R1808)</name>
    <dbReference type="NCBI Taxonomy" id="269482"/>
    <lineage>
        <taxon>Bacteria</taxon>
        <taxon>Pseudomonadati</taxon>
        <taxon>Pseudomonadota</taxon>
        <taxon>Betaproteobacteria</taxon>
        <taxon>Burkholderiales</taxon>
        <taxon>Burkholderiaceae</taxon>
        <taxon>Burkholderia</taxon>
        <taxon>Burkholderia cepacia complex</taxon>
    </lineage>
</organism>
<keyword id="KW-0997">Cell inner membrane</keyword>
<keyword id="KW-1003">Cell membrane</keyword>
<keyword id="KW-0472">Membrane</keyword>
<keyword id="KW-0520">NAD</keyword>
<keyword id="KW-0874">Quinone</keyword>
<keyword id="KW-1278">Translocase</keyword>
<keyword id="KW-0813">Transport</keyword>
<keyword id="KW-0830">Ubiquinone</keyword>
<reference key="1">
    <citation type="submission" date="2007-03" db="EMBL/GenBank/DDBJ databases">
        <title>Complete sequence of chromosome 1 of Burkholderia vietnamiensis G4.</title>
        <authorList>
            <consortium name="US DOE Joint Genome Institute"/>
            <person name="Copeland A."/>
            <person name="Lucas S."/>
            <person name="Lapidus A."/>
            <person name="Barry K."/>
            <person name="Detter J.C."/>
            <person name="Glavina del Rio T."/>
            <person name="Hammon N."/>
            <person name="Israni S."/>
            <person name="Dalin E."/>
            <person name="Tice H."/>
            <person name="Pitluck S."/>
            <person name="Chain P."/>
            <person name="Malfatti S."/>
            <person name="Shin M."/>
            <person name="Vergez L."/>
            <person name="Schmutz J."/>
            <person name="Larimer F."/>
            <person name="Land M."/>
            <person name="Hauser L."/>
            <person name="Kyrpides N."/>
            <person name="Tiedje J."/>
            <person name="Richardson P."/>
        </authorList>
    </citation>
    <scope>NUCLEOTIDE SEQUENCE [LARGE SCALE GENOMIC DNA]</scope>
    <source>
        <strain>G4 / LMG 22486</strain>
    </source>
</reference>
<accession>A4JGC7</accession>
<feature type="chain" id="PRO_0000371841" description="NADH-quinone oxidoreductase subunit D">
    <location>
        <begin position="1"/>
        <end position="417"/>
    </location>
</feature>
<dbReference type="EC" id="7.1.1.-" evidence="1"/>
<dbReference type="EMBL" id="CP000614">
    <property type="protein sequence ID" value="ABO55330.1"/>
    <property type="molecule type" value="Genomic_DNA"/>
</dbReference>
<dbReference type="SMR" id="A4JGC7"/>
<dbReference type="KEGG" id="bvi:Bcep1808_2331"/>
<dbReference type="eggNOG" id="COG0649">
    <property type="taxonomic scope" value="Bacteria"/>
</dbReference>
<dbReference type="HOGENOM" id="CLU_015134_1_1_4"/>
<dbReference type="Proteomes" id="UP000002287">
    <property type="component" value="Chromosome 1"/>
</dbReference>
<dbReference type="GO" id="GO:0005886">
    <property type="term" value="C:plasma membrane"/>
    <property type="evidence" value="ECO:0007669"/>
    <property type="project" value="UniProtKB-SubCell"/>
</dbReference>
<dbReference type="GO" id="GO:0051287">
    <property type="term" value="F:NAD binding"/>
    <property type="evidence" value="ECO:0007669"/>
    <property type="project" value="InterPro"/>
</dbReference>
<dbReference type="GO" id="GO:0050136">
    <property type="term" value="F:NADH:ubiquinone reductase (non-electrogenic) activity"/>
    <property type="evidence" value="ECO:0007669"/>
    <property type="project" value="UniProtKB-UniRule"/>
</dbReference>
<dbReference type="GO" id="GO:0048038">
    <property type="term" value="F:quinone binding"/>
    <property type="evidence" value="ECO:0007669"/>
    <property type="project" value="UniProtKB-KW"/>
</dbReference>
<dbReference type="FunFam" id="1.10.645.10:FF:000005">
    <property type="entry name" value="NADH-quinone oxidoreductase subunit D"/>
    <property type="match status" value="1"/>
</dbReference>
<dbReference type="Gene3D" id="1.10.645.10">
    <property type="entry name" value="Cytochrome-c3 Hydrogenase, chain B"/>
    <property type="match status" value="1"/>
</dbReference>
<dbReference type="HAMAP" id="MF_01358">
    <property type="entry name" value="NDH1_NuoD"/>
    <property type="match status" value="1"/>
</dbReference>
<dbReference type="InterPro" id="IPR001135">
    <property type="entry name" value="NADH_Q_OxRdtase_suD"/>
</dbReference>
<dbReference type="InterPro" id="IPR014029">
    <property type="entry name" value="NADH_UbQ_OxRdtase_49kDa_CS"/>
</dbReference>
<dbReference type="InterPro" id="IPR022885">
    <property type="entry name" value="NDH1_su_D/H"/>
</dbReference>
<dbReference type="InterPro" id="IPR029014">
    <property type="entry name" value="NiFe-Hase_large"/>
</dbReference>
<dbReference type="NCBIfam" id="TIGR01962">
    <property type="entry name" value="NuoD"/>
    <property type="match status" value="1"/>
</dbReference>
<dbReference type="NCBIfam" id="NF004739">
    <property type="entry name" value="PRK06075.1"/>
    <property type="match status" value="1"/>
</dbReference>
<dbReference type="PANTHER" id="PTHR11993:SF10">
    <property type="entry name" value="NADH DEHYDROGENASE [UBIQUINONE] IRON-SULFUR PROTEIN 2, MITOCHONDRIAL"/>
    <property type="match status" value="1"/>
</dbReference>
<dbReference type="PANTHER" id="PTHR11993">
    <property type="entry name" value="NADH-UBIQUINONE OXIDOREDUCTASE 49 KDA SUBUNIT"/>
    <property type="match status" value="1"/>
</dbReference>
<dbReference type="Pfam" id="PF00346">
    <property type="entry name" value="Complex1_49kDa"/>
    <property type="match status" value="1"/>
</dbReference>
<dbReference type="SUPFAM" id="SSF56762">
    <property type="entry name" value="HydB/Nqo4-like"/>
    <property type="match status" value="1"/>
</dbReference>
<dbReference type="PROSITE" id="PS00535">
    <property type="entry name" value="COMPLEX1_49K"/>
    <property type="match status" value="1"/>
</dbReference>